<comment type="subcellular location">
    <subcellularLocation>
        <location evidence="1">Virion</location>
    </subcellularLocation>
    <text evidence="1">Found in the core of mature virions.</text>
</comment>
<comment type="induction">
    <text evidence="1">Expressed in the intermediate phase of the viral replicative cycle.</text>
</comment>
<comment type="similarity">
    <text evidence="2">Belongs to the orthopoxvirus OPG073 family.</text>
</comment>
<organismHost>
    <name type="scientific">Cynomys gunnisoni</name>
    <name type="common">Gunnison's prairie dog</name>
    <name type="synonym">Spermophilus gunnisoni</name>
    <dbReference type="NCBI Taxonomy" id="45479"/>
</organismHost>
<organismHost>
    <name type="scientific">Cynomys leucurus</name>
    <name type="common">White-tailed prairie dog</name>
    <dbReference type="NCBI Taxonomy" id="99825"/>
</organismHost>
<organismHost>
    <name type="scientific">Cynomys ludovicianus</name>
    <name type="common">Black-tailed prairie dog</name>
    <dbReference type="NCBI Taxonomy" id="45480"/>
</organismHost>
<organismHost>
    <name type="scientific">Cynomys mexicanus</name>
    <name type="common">Mexican prairie dog</name>
    <dbReference type="NCBI Taxonomy" id="99826"/>
</organismHost>
<organismHost>
    <name type="scientific">Cynomys parvidens</name>
    <name type="common">Utah prairie dog</name>
    <dbReference type="NCBI Taxonomy" id="99827"/>
</organismHost>
<organismHost>
    <name type="scientific">Gliridae</name>
    <name type="common">dormice</name>
    <dbReference type="NCBI Taxonomy" id="30650"/>
</organismHost>
<organismHost>
    <name type="scientific">Heliosciurus ruwenzorii</name>
    <name type="common">Ruwenzori sun squirrel</name>
    <dbReference type="NCBI Taxonomy" id="226685"/>
</organismHost>
<organismHost>
    <name type="scientific">Homo sapiens</name>
    <name type="common">Human</name>
    <dbReference type="NCBI Taxonomy" id="9606"/>
</organismHost>
<organismHost>
    <name type="scientific">Mus musculus</name>
    <name type="common">Mouse</name>
    <dbReference type="NCBI Taxonomy" id="10090"/>
</organismHost>
<name>PG073_MONPV</name>
<protein>
    <recommendedName>
        <fullName>Core protein OPG073</fullName>
    </recommendedName>
</protein>
<reference key="1">
    <citation type="journal article" date="2013" name="Am. J. Trop. Med. Hyg.">
        <title>Detection of human monkeypox in the republic of the congo following intensive community education.</title>
        <authorList>
            <person name="Reynolds M.G."/>
            <person name="Emerson G.L."/>
            <person name="Pukuta E."/>
            <person name="Karhemere S."/>
            <person name="Muyembe J.J."/>
            <person name="Bikindou A."/>
            <person name="McCollum A.M."/>
            <person name="Moses C."/>
            <person name="Wilkins K."/>
            <person name="Zhao H."/>
            <person name="Damon I.K."/>
            <person name="Karem K.L."/>
            <person name="Li Y."/>
            <person name="Carroll D.S."/>
            <person name="Mombouli J.V."/>
        </authorList>
    </citation>
    <scope>NUCLEOTIDE SEQUENCE</scope>
    <source>
        <strain>ROC2010</strain>
    </source>
</reference>
<reference key="2">
    <citation type="journal article" date="2022" name="J. Infect. Dis.">
        <title>Exportation of Monkeypox virus from the African continent.</title>
        <authorList>
            <person name="Mauldin M.R."/>
            <person name="McCollum A.M."/>
            <person name="Nakazawa Y.J."/>
            <person name="Mandra A."/>
            <person name="Whitehouse E.R."/>
            <person name="Davidson W."/>
            <person name="Zhao H."/>
            <person name="Gao J."/>
            <person name="Li Y."/>
            <person name="Doty J."/>
            <person name="Yinka-Ogunleye A."/>
            <person name="Akinpelu A."/>
            <person name="Aruna O."/>
            <person name="Naidoo D."/>
            <person name="Lewandowski K."/>
            <person name="Afrough B."/>
            <person name="Graham V."/>
            <person name="Aarons E."/>
            <person name="Hewson R."/>
            <person name="Vipond R."/>
            <person name="Dunning J."/>
            <person name="Chand M."/>
            <person name="Brown C."/>
            <person name="Cohen-Gihon I."/>
            <person name="Erez N."/>
            <person name="Shifman O."/>
            <person name="Israeli O."/>
            <person name="Sharon M."/>
            <person name="Schwartz E."/>
            <person name="Beth-Din A."/>
            <person name="Zvi A."/>
            <person name="Mak T.M."/>
            <person name="Ng Y.K."/>
            <person name="Cui L."/>
            <person name="Lin R.T.P."/>
            <person name="Olson V.A."/>
            <person name="Brooks T."/>
            <person name="Paran N."/>
            <person name="Ihekweazu C."/>
            <person name="Reynolds M.G."/>
        </authorList>
    </citation>
    <scope>NUCLEOTIDE SEQUENCE [LARGE SCALE GENOMIC DNA]</scope>
    <source>
        <strain>MPXV-M5312_HM12_Rivers</strain>
    </source>
</reference>
<sequence length="129" mass="14955">MELVNIFLETDAGRVKFVIKNTDDVCASELINKFVELLSEYIHIDQSEFYLVVKDKDIFYFKCDRGSISIVNNEFYVFDEPLLFVKDFTKITGVEFIVTETMPCRIIPKNNHAVISVVTNHKFYNGLSL</sequence>
<organism>
    <name type="scientific">Monkeypox virus</name>
    <dbReference type="NCBI Taxonomy" id="10244"/>
    <lineage>
        <taxon>Viruses</taxon>
        <taxon>Varidnaviria</taxon>
        <taxon>Bamfordvirae</taxon>
        <taxon>Nucleocytoviricota</taxon>
        <taxon>Pokkesviricetes</taxon>
        <taxon>Chitovirales</taxon>
        <taxon>Poxviridae</taxon>
        <taxon>Chordopoxvirinae</taxon>
        <taxon>Orthopoxvirus</taxon>
    </lineage>
</organism>
<feature type="chain" id="PRO_0000457694" description="Core protein OPG073">
    <location>
        <begin position="1"/>
        <end position="129"/>
    </location>
</feature>
<dbReference type="EMBL" id="KC257461">
    <property type="protein sequence ID" value="AGF36963.1"/>
    <property type="molecule type" value="Genomic_DNA"/>
</dbReference>
<dbReference type="EMBL" id="MT903340">
    <property type="protein sequence ID" value="QNP12929.1"/>
    <property type="molecule type" value="Genomic_DNA"/>
</dbReference>
<dbReference type="RefSeq" id="NP_536486.1">
    <property type="nucleotide sequence ID" value="NC_003310.1"/>
</dbReference>
<dbReference type="RefSeq" id="YP_010377056.1">
    <property type="nucleotide sequence ID" value="NC_063383.1"/>
</dbReference>
<dbReference type="PDB" id="9JVU">
    <property type="method" value="X-ray"/>
    <property type="resolution" value="1.51 A"/>
    <property type="chains" value="A=1-129"/>
</dbReference>
<dbReference type="PDBsum" id="9JVU"/>
<dbReference type="SMR" id="A0A7H0DN46"/>
<dbReference type="GeneID" id="72551468"/>
<dbReference type="GeneID" id="929028"/>
<dbReference type="KEGG" id="vg:929028"/>
<dbReference type="Proteomes" id="UP000516359">
    <property type="component" value="Genome"/>
</dbReference>
<dbReference type="GO" id="GO:0044423">
    <property type="term" value="C:virion component"/>
    <property type="evidence" value="ECO:0007669"/>
    <property type="project" value="UniProtKB-KW"/>
</dbReference>
<dbReference type="InterPro" id="IPR009201">
    <property type="entry name" value="Virion_core"/>
</dbReference>
<dbReference type="Pfam" id="PF06138">
    <property type="entry name" value="Chordopox_E11"/>
    <property type="match status" value="1"/>
</dbReference>
<dbReference type="PIRSF" id="PIRSF015797">
    <property type="entry name" value="Virion_core"/>
    <property type="match status" value="1"/>
</dbReference>
<keyword id="KW-0002">3D-structure</keyword>
<keyword id="KW-0426">Late protein</keyword>
<keyword id="KW-1185">Reference proteome</keyword>
<keyword id="KW-0946">Virion</keyword>
<evidence type="ECO:0000250" key="1">
    <source>
        <dbReference type="UniProtKB" id="P68448"/>
    </source>
</evidence>
<evidence type="ECO:0000305" key="2"/>
<gene>
    <name type="primary">OPG073</name>
    <name type="ORF">MPXVgp059</name>
</gene>
<accession>A0A7H0DN46</accession>
<proteinExistence type="evidence at protein level"/>